<name>NRAM3_ARATH</name>
<feature type="chain" id="PRO_0000212600" description="Metal transporter Nramp3">
    <location>
        <begin position="1"/>
        <end position="509"/>
    </location>
</feature>
<feature type="transmembrane region" description="Helical" evidence="1">
    <location>
        <begin position="56"/>
        <end position="76"/>
    </location>
</feature>
<feature type="transmembrane region" description="Helical" evidence="1">
    <location>
        <begin position="84"/>
        <end position="104"/>
    </location>
</feature>
<feature type="transmembrane region" description="Helical" evidence="1">
    <location>
        <begin position="133"/>
        <end position="153"/>
    </location>
</feature>
<feature type="transmembrane region" description="Helical" evidence="1">
    <location>
        <begin position="165"/>
        <end position="185"/>
    </location>
</feature>
<feature type="transmembrane region" description="Helical" evidence="1">
    <location>
        <begin position="193"/>
        <end position="213"/>
    </location>
</feature>
<feature type="transmembrane region" description="Helical" evidence="1">
    <location>
        <begin position="239"/>
        <end position="259"/>
    </location>
</feature>
<feature type="transmembrane region" description="Helical" evidence="1">
    <location>
        <begin position="285"/>
        <end position="305"/>
    </location>
</feature>
<feature type="transmembrane region" description="Helical" evidence="1">
    <location>
        <begin position="327"/>
        <end position="347"/>
    </location>
</feature>
<feature type="transmembrane region" description="Helical" evidence="1">
    <location>
        <begin position="383"/>
        <end position="403"/>
    </location>
</feature>
<feature type="transmembrane region" description="Helical" evidence="1">
    <location>
        <begin position="406"/>
        <end position="426"/>
    </location>
</feature>
<feature type="transmembrane region" description="Helical" evidence="1">
    <location>
        <begin position="444"/>
        <end position="464"/>
    </location>
</feature>
<feature type="transmembrane region" description="Helical" evidence="1">
    <location>
        <begin position="472"/>
        <end position="492"/>
    </location>
</feature>
<feature type="region of interest" description="Disordered" evidence="2">
    <location>
        <begin position="1"/>
        <end position="25"/>
    </location>
</feature>
<feature type="compositionally biased region" description="Low complexity" evidence="2">
    <location>
        <begin position="1"/>
        <end position="12"/>
    </location>
</feature>
<feature type="compositionally biased region" description="Acidic residues" evidence="2">
    <location>
        <begin position="13"/>
        <end position="23"/>
    </location>
</feature>
<feature type="sequence conflict" description="In Ref. 1; AAF13278." evidence="9" ref="1">
    <original>G</original>
    <variation>S</variation>
    <location>
        <position position="433"/>
    </location>
</feature>
<organism>
    <name type="scientific">Arabidopsis thaliana</name>
    <name type="common">Mouse-ear cress</name>
    <dbReference type="NCBI Taxonomy" id="3702"/>
    <lineage>
        <taxon>Eukaryota</taxon>
        <taxon>Viridiplantae</taxon>
        <taxon>Streptophyta</taxon>
        <taxon>Embryophyta</taxon>
        <taxon>Tracheophyta</taxon>
        <taxon>Spermatophyta</taxon>
        <taxon>Magnoliopsida</taxon>
        <taxon>eudicotyledons</taxon>
        <taxon>Gunneridae</taxon>
        <taxon>Pentapetalae</taxon>
        <taxon>rosids</taxon>
        <taxon>malvids</taxon>
        <taxon>Brassicales</taxon>
        <taxon>Brassicaceae</taxon>
        <taxon>Camelineae</taxon>
        <taxon>Arabidopsis</taxon>
    </lineage>
</organism>
<proteinExistence type="evidence at protein level"/>
<protein>
    <recommendedName>
        <fullName>Metal transporter Nramp3</fullName>
        <shortName>AtNramp3</shortName>
    </recommendedName>
</protein>
<gene>
    <name type="primary">NRAMP3</name>
    <name type="ordered locus">At2g23150</name>
    <name type="ORF">F21P24.21</name>
</gene>
<evidence type="ECO:0000255" key="1"/>
<evidence type="ECO:0000256" key="2">
    <source>
        <dbReference type="SAM" id="MobiDB-lite"/>
    </source>
</evidence>
<evidence type="ECO:0000269" key="3">
    <source>
    </source>
</evidence>
<evidence type="ECO:0000269" key="4">
    <source>
    </source>
</evidence>
<evidence type="ECO:0000269" key="5">
    <source>
    </source>
</evidence>
<evidence type="ECO:0000269" key="6">
    <source>
    </source>
</evidence>
<evidence type="ECO:0000269" key="7">
    <source>
    </source>
</evidence>
<evidence type="ECO:0000269" key="8">
    <source>
    </source>
</evidence>
<evidence type="ECO:0000305" key="9"/>
<sequence>MPQLENNEPLLINEEEEEETAYDETEKVHIVRNEEEDDLEHGVGCGGAPPFSWKKLWLFTGPGFLMSIAFLDPGNLEGDLQAGAVAGYSLLWLLMWATAMGLLVQLLSARLGVATGRHLAELCRDEYPTWARMVLWVMAELALIGSDIQEVIGSAIAIKILSNGILPLWAGVVITALDCFVFLFLENYGIRKLEAVFAVLIATMGVSFAWMFGQAKPSGSELLIGILVPKLSSRTIQKAVGVVGCIIMPHNVFLHSALVQSREVDKRQKYRVQEALNYYTIESTIALFISFLINLFVTTVFAKGFYNTDLANSIGLVNAGQYLQEKYGGGVFPILYIWAIGLLAAGQSSTITGTYAGQFIMGGFLNFKMKKWLRALITRSCAIIPTIIVALVFDSSEATLDVLNEWLNVLQSIQIPFALIPLLCLVSKEQIMGSFKIGPLYKTIAWLVAALVIMINGYLLLEFFSNEVSGIVYTGFVTLFTASYGAFILYLIARGITFTPWPFKAESSH</sequence>
<accession>Q9SNV9</accession>
<accession>O22192</accession>
<reference key="1">
    <citation type="journal article" date="2000" name="Proc. Natl. Acad. Sci. U.S.A.">
        <title>Cadmium and iron transport by members of a plant metal transporter family in Arabidopsis with homology to Nramp genes.</title>
        <authorList>
            <person name="Thomine S."/>
            <person name="Wang R."/>
            <person name="Ward J.M."/>
            <person name="Crawford N.M."/>
            <person name="Schroeder J.I."/>
        </authorList>
    </citation>
    <scope>NUCLEOTIDE SEQUENCE [MRNA]</scope>
    <scope>FUNCTION</scope>
    <scope>INDUCTION</scope>
    <scope>DISRUPTION PHENOTYPE</scope>
    <source>
        <strain>cv. Columbia</strain>
    </source>
</reference>
<reference key="2">
    <citation type="journal article" date="1999" name="Nature">
        <title>Sequence and analysis of chromosome 2 of the plant Arabidopsis thaliana.</title>
        <authorList>
            <person name="Lin X."/>
            <person name="Kaul S."/>
            <person name="Rounsley S.D."/>
            <person name="Shea T.P."/>
            <person name="Benito M.-I."/>
            <person name="Town C.D."/>
            <person name="Fujii C.Y."/>
            <person name="Mason T.M."/>
            <person name="Bowman C.L."/>
            <person name="Barnstead M.E."/>
            <person name="Feldblyum T.V."/>
            <person name="Buell C.R."/>
            <person name="Ketchum K.A."/>
            <person name="Lee J.J."/>
            <person name="Ronning C.M."/>
            <person name="Koo H.L."/>
            <person name="Moffat K.S."/>
            <person name="Cronin L.A."/>
            <person name="Shen M."/>
            <person name="Pai G."/>
            <person name="Van Aken S."/>
            <person name="Umayam L."/>
            <person name="Tallon L.J."/>
            <person name="Gill J.E."/>
            <person name="Adams M.D."/>
            <person name="Carrera A.J."/>
            <person name="Creasy T.H."/>
            <person name="Goodman H.M."/>
            <person name="Somerville C.R."/>
            <person name="Copenhaver G.P."/>
            <person name="Preuss D."/>
            <person name="Nierman W.C."/>
            <person name="White O."/>
            <person name="Eisen J.A."/>
            <person name="Salzberg S.L."/>
            <person name="Fraser C.M."/>
            <person name="Venter J.C."/>
        </authorList>
    </citation>
    <scope>NUCLEOTIDE SEQUENCE [LARGE SCALE GENOMIC DNA]</scope>
    <source>
        <strain>cv. Columbia</strain>
    </source>
</reference>
<reference key="3">
    <citation type="journal article" date="2017" name="Plant J.">
        <title>Araport11: a complete reannotation of the Arabidopsis thaliana reference genome.</title>
        <authorList>
            <person name="Cheng C.Y."/>
            <person name="Krishnakumar V."/>
            <person name="Chan A.P."/>
            <person name="Thibaud-Nissen F."/>
            <person name="Schobel S."/>
            <person name="Town C.D."/>
        </authorList>
    </citation>
    <scope>GENOME REANNOTATION</scope>
    <source>
        <strain>cv. Columbia</strain>
    </source>
</reference>
<reference key="4">
    <citation type="journal article" date="2003" name="Science">
        <title>Empirical analysis of transcriptional activity in the Arabidopsis genome.</title>
        <authorList>
            <person name="Yamada K."/>
            <person name="Lim J."/>
            <person name="Dale J.M."/>
            <person name="Chen H."/>
            <person name="Shinn P."/>
            <person name="Palm C.J."/>
            <person name="Southwick A.M."/>
            <person name="Wu H.C."/>
            <person name="Kim C.J."/>
            <person name="Nguyen M."/>
            <person name="Pham P.K."/>
            <person name="Cheuk R.F."/>
            <person name="Karlin-Newmann G."/>
            <person name="Liu S.X."/>
            <person name="Lam B."/>
            <person name="Sakano H."/>
            <person name="Wu T."/>
            <person name="Yu G."/>
            <person name="Miranda M."/>
            <person name="Quach H.L."/>
            <person name="Tripp M."/>
            <person name="Chang C.H."/>
            <person name="Lee J.M."/>
            <person name="Toriumi M.J."/>
            <person name="Chan M.M."/>
            <person name="Tang C.C."/>
            <person name="Onodera C.S."/>
            <person name="Deng J.M."/>
            <person name="Akiyama K."/>
            <person name="Ansari Y."/>
            <person name="Arakawa T."/>
            <person name="Banh J."/>
            <person name="Banno F."/>
            <person name="Bowser L."/>
            <person name="Brooks S.Y."/>
            <person name="Carninci P."/>
            <person name="Chao Q."/>
            <person name="Choy N."/>
            <person name="Enju A."/>
            <person name="Goldsmith A.D."/>
            <person name="Gurjal M."/>
            <person name="Hansen N.F."/>
            <person name="Hayashizaki Y."/>
            <person name="Johnson-Hopson C."/>
            <person name="Hsuan V.W."/>
            <person name="Iida K."/>
            <person name="Karnes M."/>
            <person name="Khan S."/>
            <person name="Koesema E."/>
            <person name="Ishida J."/>
            <person name="Jiang P.X."/>
            <person name="Jones T."/>
            <person name="Kawai J."/>
            <person name="Kamiya A."/>
            <person name="Meyers C."/>
            <person name="Nakajima M."/>
            <person name="Narusaka M."/>
            <person name="Seki M."/>
            <person name="Sakurai T."/>
            <person name="Satou M."/>
            <person name="Tamse R."/>
            <person name="Vaysberg M."/>
            <person name="Wallender E.K."/>
            <person name="Wong C."/>
            <person name="Yamamura Y."/>
            <person name="Yuan S."/>
            <person name="Shinozaki K."/>
            <person name="Davis R.W."/>
            <person name="Theologis A."/>
            <person name="Ecker J.R."/>
        </authorList>
    </citation>
    <scope>NUCLEOTIDE SEQUENCE [LARGE SCALE MRNA]</scope>
    <source>
        <strain>cv. Columbia</strain>
    </source>
</reference>
<reference key="5">
    <citation type="journal article" date="2003" name="Plant J.">
        <title>AtNRAMP3, a multispecific vacuolar metal transporter involved in plant responses to iron deficiency.</title>
        <authorList>
            <person name="Thomine S."/>
            <person name="Lelievre F."/>
            <person name="Debarbieux E."/>
            <person name="Schroeder J.I."/>
            <person name="Barbier-Brygoo H."/>
        </authorList>
    </citation>
    <scope>FUNCTION</scope>
    <scope>SUBCELLULAR LOCATION</scope>
    <scope>TISSUE SPECIFICITY</scope>
    <scope>INDUCTION</scope>
    <scope>DISRUPTION PHENOTYPE</scope>
    <source>
        <strain>cv. Wassilewskija</strain>
    </source>
</reference>
<reference key="6">
    <citation type="journal article" date="2005" name="EMBO J.">
        <title>Mobilization of vacuolar iron by AtNRAMP3 and AtNRAMP4 is essential for seed germination on low iron.</title>
        <authorList>
            <person name="Lanquar V."/>
            <person name="Lelievre F."/>
            <person name="Bolte S."/>
            <person name="Hames C."/>
            <person name="Alcon C."/>
            <person name="Neumann D."/>
            <person name="Vansuyt G."/>
            <person name="Curie C."/>
            <person name="Schroeder A."/>
            <person name="Kraemer U."/>
            <person name="Barbier-Brygoo H."/>
            <person name="Thomine S."/>
        </authorList>
    </citation>
    <scope>FUNCTION</scope>
    <source>
        <strain>cv. Wassilewskija</strain>
    </source>
</reference>
<reference key="7">
    <citation type="journal article" date="2007" name="Mol. Cell. Proteomics">
        <title>A proteomics dissection of Arabidopsis thaliana vacuoles isolated from cell culture.</title>
        <authorList>
            <person name="Jaquinod M."/>
            <person name="Villiers F."/>
            <person name="Kieffer-Jaquinod S."/>
            <person name="Hugouvieux V."/>
            <person name="Bruley C."/>
            <person name="Garin J."/>
            <person name="Bourguignon J."/>
        </authorList>
    </citation>
    <scope>IDENTIFICATION BY MASS SPECTROMETRY</scope>
    <scope>SUBCELLULAR LOCATION [LARGE SCALE ANALYSIS]</scope>
</reference>
<reference key="8">
    <citation type="journal article" date="2009" name="Plant J.">
        <title>NRAMP genes function in Arabidopsis thaliana resistance to Erwinia chrysanthemi infection.</title>
        <authorList>
            <person name="Segond D."/>
            <person name="Dellagi A."/>
            <person name="Lanquar V."/>
            <person name="Rigault M."/>
            <person name="Patrit O."/>
            <person name="Thomine S."/>
            <person name="Expert D."/>
        </authorList>
    </citation>
    <scope>FUNCTION</scope>
    <scope>INDUCTION</scope>
    <source>
        <strain>cv. Wassilewskija</strain>
    </source>
</reference>
<reference key="9">
    <citation type="journal article" date="2010" name="Plant Physiol.">
        <title>Export of vacuolar manganese by AtNRAMP3 and AtNRAMP4 is required for optimal photosynthesis and growth under manganese deficiency.</title>
        <authorList>
            <person name="Lanquar V."/>
            <person name="Ramos M.S."/>
            <person name="Lelievre F."/>
            <person name="Barbier-Brygoo H."/>
            <person name="Krieger-Liszkay A."/>
            <person name="Kraemer U."/>
            <person name="Thomine S."/>
        </authorList>
    </citation>
    <scope>FUNCTION</scope>
</reference>
<dbReference type="EMBL" id="AF202539">
    <property type="protein sequence ID" value="AAF13278.1"/>
    <property type="molecule type" value="mRNA"/>
</dbReference>
<dbReference type="EMBL" id="AC002391">
    <property type="protein sequence ID" value="AAB87118.1"/>
    <property type="molecule type" value="Genomic_DNA"/>
</dbReference>
<dbReference type="EMBL" id="AC004401">
    <property type="protein sequence ID" value="AAM14929.1"/>
    <property type="molecule type" value="Genomic_DNA"/>
</dbReference>
<dbReference type="EMBL" id="CP002685">
    <property type="protein sequence ID" value="AEC07422.1"/>
    <property type="molecule type" value="Genomic_DNA"/>
</dbReference>
<dbReference type="EMBL" id="AY058203">
    <property type="protein sequence ID" value="AAL25615.1"/>
    <property type="molecule type" value="mRNA"/>
</dbReference>
<dbReference type="PIR" id="T00517">
    <property type="entry name" value="T00517"/>
</dbReference>
<dbReference type="RefSeq" id="NP_179896.1">
    <property type="nucleotide sequence ID" value="NM_127879.4"/>
</dbReference>
<dbReference type="SMR" id="Q9SNV9"/>
<dbReference type="BioGRID" id="2200">
    <property type="interactions" value="4"/>
</dbReference>
<dbReference type="FunCoup" id="Q9SNV9">
    <property type="interactions" value="2469"/>
</dbReference>
<dbReference type="IntAct" id="Q9SNV9">
    <property type="interactions" value="4"/>
</dbReference>
<dbReference type="STRING" id="3702.Q9SNV9"/>
<dbReference type="PaxDb" id="3702-AT2G23150.1"/>
<dbReference type="ProteomicsDB" id="239056"/>
<dbReference type="EnsemblPlants" id="AT2G23150.1">
    <property type="protein sequence ID" value="AT2G23150.1"/>
    <property type="gene ID" value="AT2G23150"/>
</dbReference>
<dbReference type="GeneID" id="816847"/>
<dbReference type="Gramene" id="AT2G23150.1">
    <property type="protein sequence ID" value="AT2G23150.1"/>
    <property type="gene ID" value="AT2G23150"/>
</dbReference>
<dbReference type="KEGG" id="ath:AT2G23150"/>
<dbReference type="Araport" id="AT2G23150"/>
<dbReference type="TAIR" id="AT2G23150">
    <property type="gene designation" value="NRAMP3"/>
</dbReference>
<dbReference type="eggNOG" id="KOG1291">
    <property type="taxonomic scope" value="Eukaryota"/>
</dbReference>
<dbReference type="HOGENOM" id="CLU_020088_5_1_1"/>
<dbReference type="InParanoid" id="Q9SNV9"/>
<dbReference type="OMA" id="EPRETAY"/>
<dbReference type="PhylomeDB" id="Q9SNV9"/>
<dbReference type="PRO" id="PR:Q9SNV9"/>
<dbReference type="Proteomes" id="UP000006548">
    <property type="component" value="Chromosome 2"/>
</dbReference>
<dbReference type="ExpressionAtlas" id="Q9SNV9">
    <property type="expression patterns" value="baseline and differential"/>
</dbReference>
<dbReference type="GO" id="GO:0005794">
    <property type="term" value="C:Golgi apparatus"/>
    <property type="evidence" value="ECO:0007005"/>
    <property type="project" value="TAIR"/>
</dbReference>
<dbReference type="GO" id="GO:0000325">
    <property type="term" value="C:plant-type vacuole"/>
    <property type="evidence" value="ECO:0007005"/>
    <property type="project" value="TAIR"/>
</dbReference>
<dbReference type="GO" id="GO:0009506">
    <property type="term" value="C:plasmodesma"/>
    <property type="evidence" value="ECO:0007005"/>
    <property type="project" value="TAIR"/>
</dbReference>
<dbReference type="GO" id="GO:0005774">
    <property type="term" value="C:vacuolar membrane"/>
    <property type="evidence" value="ECO:0000314"/>
    <property type="project" value="TAIR"/>
</dbReference>
<dbReference type="GO" id="GO:0005773">
    <property type="term" value="C:vacuole"/>
    <property type="evidence" value="ECO:0007005"/>
    <property type="project" value="TAIR"/>
</dbReference>
<dbReference type="GO" id="GO:0046873">
    <property type="term" value="F:metal ion transmembrane transporter activity"/>
    <property type="evidence" value="ECO:0007669"/>
    <property type="project" value="InterPro"/>
</dbReference>
<dbReference type="GO" id="GO:0042742">
    <property type="term" value="P:defense response to bacterium"/>
    <property type="evidence" value="ECO:0000315"/>
    <property type="project" value="TAIR"/>
</dbReference>
<dbReference type="GO" id="GO:0006826">
    <property type="term" value="P:iron ion transport"/>
    <property type="evidence" value="ECO:0007669"/>
    <property type="project" value="UniProtKB-KW"/>
</dbReference>
<dbReference type="GO" id="GO:0006828">
    <property type="term" value="P:manganese ion transport"/>
    <property type="evidence" value="ECO:0000315"/>
    <property type="project" value="TAIR"/>
</dbReference>
<dbReference type="GO" id="GO:2000379">
    <property type="term" value="P:positive regulation of reactive oxygen species metabolic process"/>
    <property type="evidence" value="ECO:0000316"/>
    <property type="project" value="TAIR"/>
</dbReference>
<dbReference type="GO" id="GO:0009617">
    <property type="term" value="P:response to bacterium"/>
    <property type="evidence" value="ECO:0000270"/>
    <property type="project" value="TAIR"/>
</dbReference>
<dbReference type="GO" id="GO:0010043">
    <property type="term" value="P:response to zinc ion"/>
    <property type="evidence" value="ECO:0000270"/>
    <property type="project" value="TAIR"/>
</dbReference>
<dbReference type="HAMAP" id="MF_00221">
    <property type="entry name" value="NRAMP"/>
    <property type="match status" value="1"/>
</dbReference>
<dbReference type="InterPro" id="IPR001046">
    <property type="entry name" value="NRAMP_fam"/>
</dbReference>
<dbReference type="NCBIfam" id="TIGR01197">
    <property type="entry name" value="nramp"/>
    <property type="match status" value="1"/>
</dbReference>
<dbReference type="NCBIfam" id="NF037982">
    <property type="entry name" value="Nramp_1"/>
    <property type="match status" value="1"/>
</dbReference>
<dbReference type="PANTHER" id="PTHR11706:SF109">
    <property type="entry name" value="METAL TRANSPORTER NRAMP3"/>
    <property type="match status" value="1"/>
</dbReference>
<dbReference type="PANTHER" id="PTHR11706">
    <property type="entry name" value="SOLUTE CARRIER PROTEIN FAMILY 11 MEMBER"/>
    <property type="match status" value="1"/>
</dbReference>
<dbReference type="Pfam" id="PF01566">
    <property type="entry name" value="Nramp"/>
    <property type="match status" value="1"/>
</dbReference>
<dbReference type="PRINTS" id="PR00447">
    <property type="entry name" value="NATRESASSCMP"/>
</dbReference>
<comment type="function">
    <text evidence="3 4 5 7 8">Vacuolar metal transporter involved in intracellular metal homeostasis. Can transport iron (Fe), manganese (Mn) and cadmium (Cd). Regulates metal accumulation under Fe starvation. Acts redundantly with NRAMP4 to mobilize vacuolar Fe and provide sufficient Fe during seed germination. In association with NRAMP4, required for optimal growth and photosynthesis under Mn deficiency. Exports Mn from vacuoles in leaf mesophyll cells, making Mn available for functional photosystem II in chloroplasts. Involved in basal resistance to the bacterial pathogen E.chrysanthemi.</text>
</comment>
<comment type="subcellular location">
    <subcellularLocation>
        <location evidence="4 6">Vacuole membrane</location>
        <topology evidence="1 4">Multi-pass membrane protein</topology>
    </subcellularLocation>
</comment>
<comment type="tissue specificity">
    <text evidence="4">Expressed in vascular tissues.</text>
</comment>
<comment type="induction">
    <text evidence="3 4 7">By iron starvation and infection with the bacterial pathogens P.syringae and E.chrysanthemi.</text>
</comment>
<comment type="disruption phenotype">
    <text evidence="3 4">No visible phenotype under normal growth condition, but slightly enhanced resistance of root growth in presence of Cd and increased accumulation of Mn and Zn under Fe starvation.</text>
</comment>
<comment type="similarity">
    <text evidence="9">Belongs to the NRAMP (TC 2.A.55) family.</text>
</comment>
<keyword id="KW-0406">Ion transport</keyword>
<keyword id="KW-0408">Iron</keyword>
<keyword id="KW-0410">Iron transport</keyword>
<keyword id="KW-0472">Membrane</keyword>
<keyword id="KW-1185">Reference proteome</keyword>
<keyword id="KW-0812">Transmembrane</keyword>
<keyword id="KW-1133">Transmembrane helix</keyword>
<keyword id="KW-0813">Transport</keyword>
<keyword id="KW-0926">Vacuole</keyword>